<reference key="1">
    <citation type="journal article" date="2004" name="Plant Physiol.">
        <title>The Arabidopsis cyclophilin gene family.</title>
        <authorList>
            <person name="Romano P.G.N."/>
            <person name="Horton P."/>
            <person name="Gray J.E."/>
        </authorList>
    </citation>
    <scope>NUCLEOTIDE SEQUENCE [MRNA]</scope>
    <scope>TISSUE SPECIFICITY</scope>
    <scope>GENE FAMILY</scope>
    <scope>NOMENCLATURE</scope>
</reference>
<reference key="2">
    <citation type="journal article" date="2000" name="Nature">
        <title>Sequence and analysis of chromosome 3 of the plant Arabidopsis thaliana.</title>
        <authorList>
            <person name="Salanoubat M."/>
            <person name="Lemcke K."/>
            <person name="Rieger M."/>
            <person name="Ansorge W."/>
            <person name="Unseld M."/>
            <person name="Fartmann B."/>
            <person name="Valle G."/>
            <person name="Bloecker H."/>
            <person name="Perez-Alonso M."/>
            <person name="Obermaier B."/>
            <person name="Delseny M."/>
            <person name="Boutry M."/>
            <person name="Grivell L.A."/>
            <person name="Mache R."/>
            <person name="Puigdomenech P."/>
            <person name="De Simone V."/>
            <person name="Choisne N."/>
            <person name="Artiguenave F."/>
            <person name="Robert C."/>
            <person name="Brottier P."/>
            <person name="Wincker P."/>
            <person name="Cattolico L."/>
            <person name="Weissenbach J."/>
            <person name="Saurin W."/>
            <person name="Quetier F."/>
            <person name="Schaefer M."/>
            <person name="Mueller-Auer S."/>
            <person name="Gabel C."/>
            <person name="Fuchs M."/>
            <person name="Benes V."/>
            <person name="Wurmbach E."/>
            <person name="Drzonek H."/>
            <person name="Erfle H."/>
            <person name="Jordan N."/>
            <person name="Bangert S."/>
            <person name="Wiedelmann R."/>
            <person name="Kranz H."/>
            <person name="Voss H."/>
            <person name="Holland R."/>
            <person name="Brandt P."/>
            <person name="Nyakatura G."/>
            <person name="Vezzi A."/>
            <person name="D'Angelo M."/>
            <person name="Pallavicini A."/>
            <person name="Toppo S."/>
            <person name="Simionati B."/>
            <person name="Conrad A."/>
            <person name="Hornischer K."/>
            <person name="Kauer G."/>
            <person name="Loehnert T.-H."/>
            <person name="Nordsiek G."/>
            <person name="Reichelt J."/>
            <person name="Scharfe M."/>
            <person name="Schoen O."/>
            <person name="Bargues M."/>
            <person name="Terol J."/>
            <person name="Climent J."/>
            <person name="Navarro P."/>
            <person name="Collado C."/>
            <person name="Perez-Perez A."/>
            <person name="Ottenwaelder B."/>
            <person name="Duchemin D."/>
            <person name="Cooke R."/>
            <person name="Laudie M."/>
            <person name="Berger-Llauro C."/>
            <person name="Purnelle B."/>
            <person name="Masuy D."/>
            <person name="de Haan M."/>
            <person name="Maarse A.C."/>
            <person name="Alcaraz J.-P."/>
            <person name="Cottet A."/>
            <person name="Casacuberta E."/>
            <person name="Monfort A."/>
            <person name="Argiriou A."/>
            <person name="Flores M."/>
            <person name="Liguori R."/>
            <person name="Vitale D."/>
            <person name="Mannhaupt G."/>
            <person name="Haase D."/>
            <person name="Schoof H."/>
            <person name="Rudd S."/>
            <person name="Zaccaria P."/>
            <person name="Mewes H.-W."/>
            <person name="Mayer K.F.X."/>
            <person name="Kaul S."/>
            <person name="Town C.D."/>
            <person name="Koo H.L."/>
            <person name="Tallon L.J."/>
            <person name="Jenkins J."/>
            <person name="Rooney T."/>
            <person name="Rizzo M."/>
            <person name="Walts A."/>
            <person name="Utterback T."/>
            <person name="Fujii C.Y."/>
            <person name="Shea T.P."/>
            <person name="Creasy T.H."/>
            <person name="Haas B."/>
            <person name="Maiti R."/>
            <person name="Wu D."/>
            <person name="Peterson J."/>
            <person name="Van Aken S."/>
            <person name="Pai G."/>
            <person name="Militscher J."/>
            <person name="Sellers P."/>
            <person name="Gill J.E."/>
            <person name="Feldblyum T.V."/>
            <person name="Preuss D."/>
            <person name="Lin X."/>
            <person name="Nierman W.C."/>
            <person name="Salzberg S.L."/>
            <person name="White O."/>
            <person name="Venter J.C."/>
            <person name="Fraser C.M."/>
            <person name="Kaneko T."/>
            <person name="Nakamura Y."/>
            <person name="Sato S."/>
            <person name="Kato T."/>
            <person name="Asamizu E."/>
            <person name="Sasamoto S."/>
            <person name="Kimura T."/>
            <person name="Idesawa K."/>
            <person name="Kawashima K."/>
            <person name="Kishida Y."/>
            <person name="Kiyokawa C."/>
            <person name="Kohara M."/>
            <person name="Matsumoto M."/>
            <person name="Matsuno A."/>
            <person name="Muraki A."/>
            <person name="Nakayama S."/>
            <person name="Nakazaki N."/>
            <person name="Shinpo S."/>
            <person name="Takeuchi C."/>
            <person name="Wada T."/>
            <person name="Watanabe A."/>
            <person name="Yamada M."/>
            <person name="Yasuda M."/>
            <person name="Tabata S."/>
        </authorList>
    </citation>
    <scope>NUCLEOTIDE SEQUENCE [LARGE SCALE GENOMIC DNA]</scope>
    <source>
        <strain>cv. Columbia</strain>
    </source>
</reference>
<reference key="3">
    <citation type="journal article" date="2017" name="Plant J.">
        <title>Araport11: a complete reannotation of the Arabidopsis thaliana reference genome.</title>
        <authorList>
            <person name="Cheng C.Y."/>
            <person name="Krishnakumar V."/>
            <person name="Chan A.P."/>
            <person name="Thibaud-Nissen F."/>
            <person name="Schobel S."/>
            <person name="Town C.D."/>
        </authorList>
    </citation>
    <scope>GENOME REANNOTATION</scope>
    <source>
        <strain>cv. Columbia</strain>
    </source>
</reference>
<reference key="4">
    <citation type="journal article" date="2002" name="Science">
        <title>Functional annotation of a full-length Arabidopsis cDNA collection.</title>
        <authorList>
            <person name="Seki M."/>
            <person name="Narusaka M."/>
            <person name="Kamiya A."/>
            <person name="Ishida J."/>
            <person name="Satou M."/>
            <person name="Sakurai T."/>
            <person name="Nakajima M."/>
            <person name="Enju A."/>
            <person name="Akiyama K."/>
            <person name="Oono Y."/>
            <person name="Muramatsu M."/>
            <person name="Hayashizaki Y."/>
            <person name="Kawai J."/>
            <person name="Carninci P."/>
            <person name="Itoh M."/>
            <person name="Ishii Y."/>
            <person name="Arakawa T."/>
            <person name="Shibata K."/>
            <person name="Shinagawa A."/>
            <person name="Shinozaki K."/>
        </authorList>
    </citation>
    <scope>NUCLEOTIDE SEQUENCE [LARGE SCALE MRNA]</scope>
    <source>
        <strain>cv. Columbia</strain>
    </source>
</reference>
<reference key="5">
    <citation type="journal article" date="2003" name="Science">
        <title>Empirical analysis of transcriptional activity in the Arabidopsis genome.</title>
        <authorList>
            <person name="Yamada K."/>
            <person name="Lim J."/>
            <person name="Dale J.M."/>
            <person name="Chen H."/>
            <person name="Shinn P."/>
            <person name="Palm C.J."/>
            <person name="Southwick A.M."/>
            <person name="Wu H.C."/>
            <person name="Kim C.J."/>
            <person name="Nguyen M."/>
            <person name="Pham P.K."/>
            <person name="Cheuk R.F."/>
            <person name="Karlin-Newmann G."/>
            <person name="Liu S.X."/>
            <person name="Lam B."/>
            <person name="Sakano H."/>
            <person name="Wu T."/>
            <person name="Yu G."/>
            <person name="Miranda M."/>
            <person name="Quach H.L."/>
            <person name="Tripp M."/>
            <person name="Chang C.H."/>
            <person name="Lee J.M."/>
            <person name="Toriumi M.J."/>
            <person name="Chan M.M."/>
            <person name="Tang C.C."/>
            <person name="Onodera C.S."/>
            <person name="Deng J.M."/>
            <person name="Akiyama K."/>
            <person name="Ansari Y."/>
            <person name="Arakawa T."/>
            <person name="Banh J."/>
            <person name="Banno F."/>
            <person name="Bowser L."/>
            <person name="Brooks S.Y."/>
            <person name="Carninci P."/>
            <person name="Chao Q."/>
            <person name="Choy N."/>
            <person name="Enju A."/>
            <person name="Goldsmith A.D."/>
            <person name="Gurjal M."/>
            <person name="Hansen N.F."/>
            <person name="Hayashizaki Y."/>
            <person name="Johnson-Hopson C."/>
            <person name="Hsuan V.W."/>
            <person name="Iida K."/>
            <person name="Karnes M."/>
            <person name="Khan S."/>
            <person name="Koesema E."/>
            <person name="Ishida J."/>
            <person name="Jiang P.X."/>
            <person name="Jones T."/>
            <person name="Kawai J."/>
            <person name="Kamiya A."/>
            <person name="Meyers C."/>
            <person name="Nakajima M."/>
            <person name="Narusaka M."/>
            <person name="Seki M."/>
            <person name="Sakurai T."/>
            <person name="Satou M."/>
            <person name="Tamse R."/>
            <person name="Vaysberg M."/>
            <person name="Wallender E.K."/>
            <person name="Wong C."/>
            <person name="Yamamura Y."/>
            <person name="Yuan S."/>
            <person name="Shinozaki K."/>
            <person name="Davis R.W."/>
            <person name="Theologis A."/>
            <person name="Ecker J.R."/>
        </authorList>
    </citation>
    <scope>NUCLEOTIDE SEQUENCE [LARGE SCALE MRNA]</scope>
    <source>
        <strain>cv. Columbia</strain>
    </source>
</reference>
<reference key="6">
    <citation type="journal article" date="2004" name="Plant Physiol.">
        <title>Immunophilins and parvulins. Superfamily of peptidyl prolyl isomerases in Arabidopsis.</title>
        <authorList>
            <person name="He Z."/>
            <person name="Li L."/>
            <person name="Luan S."/>
        </authorList>
    </citation>
    <scope>TISSUE SPECIFICITY</scope>
    <scope>GENE FAMILY</scope>
    <scope>NOMENCLATURE</scope>
    <scope>INDUCTION</scope>
</reference>
<accession>Q9C835</accession>
<comment type="function">
    <text evidence="1">PPIases accelerate the folding of proteins. It catalyzes the cis-trans isomerization of proline imidic peptide bonds in oligopeptides (By similarity).</text>
</comment>
<comment type="catalytic activity">
    <reaction>
        <text>[protein]-peptidylproline (omega=180) = [protein]-peptidylproline (omega=0)</text>
        <dbReference type="Rhea" id="RHEA:16237"/>
        <dbReference type="Rhea" id="RHEA-COMP:10747"/>
        <dbReference type="Rhea" id="RHEA-COMP:10748"/>
        <dbReference type="ChEBI" id="CHEBI:83833"/>
        <dbReference type="ChEBI" id="CHEBI:83834"/>
        <dbReference type="EC" id="5.2.1.8"/>
    </reaction>
</comment>
<comment type="subcellular location">
    <subcellularLocation>
        <location evidence="7">Membrane</location>
        <topology evidence="7">Single-pass type II membrane protein</topology>
    </subcellularLocation>
</comment>
<comment type="tissue specificity">
    <text evidence="5 6">Ubiquitous.</text>
</comment>
<comment type="induction">
    <text evidence="5">Down-regulated by dark treatment.</text>
</comment>
<comment type="similarity">
    <text evidence="7">Belongs to the cyclophilin-type PPIase family.</text>
</comment>
<gene>
    <name type="primary">CYP21-4</name>
    <name type="ordered locus">At3g66654</name>
    <name type="ORF">T8E24.14</name>
</gene>
<feature type="chain" id="PRO_0000429936" description="Peptidyl-prolyl cis-trans isomerase CYP21-4">
    <location>
        <begin position="1"/>
        <end position="236"/>
    </location>
</feature>
<feature type="transmembrane region" description="Helical; Signal-anchor for type II membrane protein" evidence="2">
    <location>
        <begin position="22"/>
        <end position="42"/>
    </location>
</feature>
<feature type="domain" description="PPIase cyclophilin-type" evidence="3">
    <location>
        <begin position="82"/>
        <end position="232"/>
    </location>
</feature>
<feature type="region of interest" description="Disordered" evidence="4">
    <location>
        <begin position="52"/>
        <end position="71"/>
    </location>
</feature>
<feature type="compositionally biased region" description="Basic and acidic residues" evidence="4">
    <location>
        <begin position="54"/>
        <end position="67"/>
    </location>
</feature>
<feature type="glycosylation site" description="N-linked (GlcNAc...) asparagine" evidence="2">
    <location>
        <position position="86"/>
    </location>
</feature>
<evidence type="ECO:0000250" key="1"/>
<evidence type="ECO:0000255" key="2"/>
<evidence type="ECO:0000255" key="3">
    <source>
        <dbReference type="PROSITE-ProRule" id="PRU00156"/>
    </source>
</evidence>
<evidence type="ECO:0000256" key="4">
    <source>
        <dbReference type="SAM" id="MobiDB-lite"/>
    </source>
</evidence>
<evidence type="ECO:0000269" key="5">
    <source>
    </source>
</evidence>
<evidence type="ECO:0000269" key="6">
    <source>
    </source>
</evidence>
<evidence type="ECO:0000305" key="7"/>
<name>CP21D_ARATH</name>
<dbReference type="EC" id="5.2.1.8"/>
<dbReference type="EMBL" id="AY568521">
    <property type="protein sequence ID" value="AAS75304.1"/>
    <property type="molecule type" value="mRNA"/>
</dbReference>
<dbReference type="EMBL" id="AC036106">
    <property type="protein sequence ID" value="AAG50994.1"/>
    <property type="molecule type" value="Genomic_DNA"/>
</dbReference>
<dbReference type="EMBL" id="CP002686">
    <property type="protein sequence ID" value="AEE74429.1"/>
    <property type="molecule type" value="Genomic_DNA"/>
</dbReference>
<dbReference type="EMBL" id="CP002686">
    <property type="protein sequence ID" value="AEE74430.1"/>
    <property type="molecule type" value="Genomic_DNA"/>
</dbReference>
<dbReference type="EMBL" id="CP002686">
    <property type="protein sequence ID" value="AEE74431.1"/>
    <property type="molecule type" value="Genomic_DNA"/>
</dbReference>
<dbReference type="EMBL" id="CP002686">
    <property type="protein sequence ID" value="ANM64487.1"/>
    <property type="molecule type" value="Genomic_DNA"/>
</dbReference>
<dbReference type="EMBL" id="CP002686">
    <property type="protein sequence ID" value="ANM64488.1"/>
    <property type="molecule type" value="Genomic_DNA"/>
</dbReference>
<dbReference type="EMBL" id="BT005430">
    <property type="protein sequence ID" value="AAO63850.1"/>
    <property type="molecule type" value="mRNA"/>
</dbReference>
<dbReference type="EMBL" id="AK117708">
    <property type="protein sequence ID" value="BAC42359.1"/>
    <property type="molecule type" value="mRNA"/>
</dbReference>
<dbReference type="RefSeq" id="NP_001326512.1">
    <property type="nucleotide sequence ID" value="NM_001340222.1"/>
</dbReference>
<dbReference type="RefSeq" id="NP_001326513.1">
    <property type="nucleotide sequence ID" value="NM_001340221.1"/>
</dbReference>
<dbReference type="RefSeq" id="NP_187319.1">
    <property type="nucleotide sequence ID" value="NM_111543.4"/>
</dbReference>
<dbReference type="RefSeq" id="NP_974240.1">
    <property type="nucleotide sequence ID" value="NM_202511.1"/>
</dbReference>
<dbReference type="RefSeq" id="NP_974241.1">
    <property type="nucleotide sequence ID" value="NM_202512.2"/>
</dbReference>
<dbReference type="SMR" id="Q9C835"/>
<dbReference type="BioGRID" id="5182">
    <property type="interactions" value="382"/>
</dbReference>
<dbReference type="FunCoup" id="Q9C835">
    <property type="interactions" value="2184"/>
</dbReference>
<dbReference type="IntAct" id="Q9C835">
    <property type="interactions" value="383"/>
</dbReference>
<dbReference type="STRING" id="3702.Q9C835"/>
<dbReference type="GlyCosmos" id="Q9C835">
    <property type="glycosylation" value="1 site, No reported glycans"/>
</dbReference>
<dbReference type="GlyGen" id="Q9C835">
    <property type="glycosylation" value="1 site"/>
</dbReference>
<dbReference type="SwissPalm" id="Q9C835"/>
<dbReference type="PaxDb" id="3702-AT3G66654.3"/>
<dbReference type="ProteomicsDB" id="224401"/>
<dbReference type="EnsemblPlants" id="AT3G66654.1">
    <property type="protein sequence ID" value="AT3G66654.1"/>
    <property type="gene ID" value="AT3G66654"/>
</dbReference>
<dbReference type="EnsemblPlants" id="AT3G66654.2">
    <property type="protein sequence ID" value="AT3G66654.2"/>
    <property type="gene ID" value="AT3G66654"/>
</dbReference>
<dbReference type="EnsemblPlants" id="AT3G66654.3">
    <property type="protein sequence ID" value="AT3G66654.3"/>
    <property type="gene ID" value="AT3G66654"/>
</dbReference>
<dbReference type="EnsemblPlants" id="AT3G66654.4">
    <property type="protein sequence ID" value="AT3G66654.4"/>
    <property type="gene ID" value="AT3G66654"/>
</dbReference>
<dbReference type="EnsemblPlants" id="AT3G66654.5">
    <property type="protein sequence ID" value="AT3G66654.5"/>
    <property type="gene ID" value="AT3G66654"/>
</dbReference>
<dbReference type="GeneID" id="819847"/>
<dbReference type="Gramene" id="AT3G66654.1">
    <property type="protein sequence ID" value="AT3G66654.1"/>
    <property type="gene ID" value="AT3G66654"/>
</dbReference>
<dbReference type="Gramene" id="AT3G66654.2">
    <property type="protein sequence ID" value="AT3G66654.2"/>
    <property type="gene ID" value="AT3G66654"/>
</dbReference>
<dbReference type="Gramene" id="AT3G66654.3">
    <property type="protein sequence ID" value="AT3G66654.3"/>
    <property type="gene ID" value="AT3G66654"/>
</dbReference>
<dbReference type="Gramene" id="AT3G66654.4">
    <property type="protein sequence ID" value="AT3G66654.4"/>
    <property type="gene ID" value="AT3G66654"/>
</dbReference>
<dbReference type="Gramene" id="AT3G66654.5">
    <property type="protein sequence ID" value="AT3G66654.5"/>
    <property type="gene ID" value="AT3G66654"/>
</dbReference>
<dbReference type="KEGG" id="ath:AT3G66654"/>
<dbReference type="Araport" id="AT3G66654"/>
<dbReference type="TAIR" id="AT3G66654">
    <property type="gene designation" value="CYP21-4"/>
</dbReference>
<dbReference type="eggNOG" id="KOG0882">
    <property type="taxonomic scope" value="Eukaryota"/>
</dbReference>
<dbReference type="HOGENOM" id="CLU_012062_16_1_1"/>
<dbReference type="InParanoid" id="Q9C835"/>
<dbReference type="OMA" id="HRMIISA"/>
<dbReference type="PhylomeDB" id="Q9C835"/>
<dbReference type="PRO" id="PR:Q9C835"/>
<dbReference type="Proteomes" id="UP000006548">
    <property type="component" value="Chromosome 3"/>
</dbReference>
<dbReference type="ExpressionAtlas" id="Q9C835">
    <property type="expression patterns" value="baseline and differential"/>
</dbReference>
<dbReference type="GO" id="GO:0005768">
    <property type="term" value="C:endosome"/>
    <property type="evidence" value="ECO:0007005"/>
    <property type="project" value="TAIR"/>
</dbReference>
<dbReference type="GO" id="GO:0005794">
    <property type="term" value="C:Golgi apparatus"/>
    <property type="evidence" value="ECO:0007005"/>
    <property type="project" value="TAIR"/>
</dbReference>
<dbReference type="GO" id="GO:0005797">
    <property type="term" value="C:Golgi medial cisterna"/>
    <property type="evidence" value="ECO:0007005"/>
    <property type="project" value="TAIR"/>
</dbReference>
<dbReference type="GO" id="GO:0016020">
    <property type="term" value="C:membrane"/>
    <property type="evidence" value="ECO:0007669"/>
    <property type="project" value="UniProtKB-SubCell"/>
</dbReference>
<dbReference type="GO" id="GO:0005802">
    <property type="term" value="C:trans-Golgi network"/>
    <property type="evidence" value="ECO:0007005"/>
    <property type="project" value="TAIR"/>
</dbReference>
<dbReference type="GO" id="GO:0003755">
    <property type="term" value="F:peptidyl-prolyl cis-trans isomerase activity"/>
    <property type="evidence" value="ECO:0007669"/>
    <property type="project" value="UniProtKB-KW"/>
</dbReference>
<dbReference type="FunFam" id="2.40.100.10:FF:000074">
    <property type="entry name" value="Peptidyl-prolyl cis-trans isomerase"/>
    <property type="match status" value="1"/>
</dbReference>
<dbReference type="Gene3D" id="2.40.100.10">
    <property type="entry name" value="Cyclophilin-like"/>
    <property type="match status" value="1"/>
</dbReference>
<dbReference type="InterPro" id="IPR029000">
    <property type="entry name" value="Cyclophilin-like_dom_sf"/>
</dbReference>
<dbReference type="InterPro" id="IPR002130">
    <property type="entry name" value="Cyclophilin-type_PPIase_dom"/>
</dbReference>
<dbReference type="PANTHER" id="PTHR47269">
    <property type="entry name" value="PEPTIDYL-PROLYL CIS-TRANS ISOMERASE CYP21-4"/>
    <property type="match status" value="1"/>
</dbReference>
<dbReference type="PANTHER" id="PTHR47269:SF1">
    <property type="entry name" value="PEPTIDYL-PROLYL CIS-TRANS ISOMERASE CYP21-4"/>
    <property type="match status" value="1"/>
</dbReference>
<dbReference type="Pfam" id="PF00160">
    <property type="entry name" value="Pro_isomerase"/>
    <property type="match status" value="1"/>
</dbReference>
<dbReference type="PRINTS" id="PR00153">
    <property type="entry name" value="CSAPPISMRASE"/>
</dbReference>
<dbReference type="SUPFAM" id="SSF50891">
    <property type="entry name" value="Cyclophilin-like"/>
    <property type="match status" value="1"/>
</dbReference>
<dbReference type="PROSITE" id="PS50072">
    <property type="entry name" value="CSA_PPIASE_2"/>
    <property type="match status" value="1"/>
</dbReference>
<protein>
    <recommendedName>
        <fullName>Peptidyl-prolyl cis-trans isomerase CYP21-4</fullName>
        <shortName>PPIase CYP21-4</shortName>
        <ecNumber>5.2.1.8</ecNumber>
    </recommendedName>
    <alternativeName>
        <fullName>Cyclophilin of 21 kDa 4</fullName>
    </alternativeName>
    <alternativeName>
        <fullName>Cyclophilin-21-4</fullName>
    </alternativeName>
</protein>
<organism>
    <name type="scientific">Arabidopsis thaliana</name>
    <name type="common">Mouse-ear cress</name>
    <dbReference type="NCBI Taxonomy" id="3702"/>
    <lineage>
        <taxon>Eukaryota</taxon>
        <taxon>Viridiplantae</taxon>
        <taxon>Streptophyta</taxon>
        <taxon>Embryophyta</taxon>
        <taxon>Tracheophyta</taxon>
        <taxon>Spermatophyta</taxon>
        <taxon>Magnoliopsida</taxon>
        <taxon>eudicotyledons</taxon>
        <taxon>Gunneridae</taxon>
        <taxon>Pentapetalae</taxon>
        <taxon>rosids</taxon>
        <taxon>malvids</taxon>
        <taxon>Brassicales</taxon>
        <taxon>Brassicaceae</taxon>
        <taxon>Camelineae</taxon>
        <taxon>Arabidopsis</taxon>
    </lineage>
</organism>
<keyword id="KW-0143">Chaperone</keyword>
<keyword id="KW-0325">Glycoprotein</keyword>
<keyword id="KW-0413">Isomerase</keyword>
<keyword id="KW-0472">Membrane</keyword>
<keyword id="KW-1185">Reference proteome</keyword>
<keyword id="KW-0697">Rotamase</keyword>
<keyword id="KW-0735">Signal-anchor</keyword>
<keyword id="KW-0809">Transit peptide</keyword>
<keyword id="KW-0812">Transmembrane</keyword>
<keyword id="KW-1133">Transmembrane helix</keyword>
<sequence length="236" mass="26427">MAKIKPQALLNQSKKKKGPSRISISTIIVCNLVVAVVILSLVTTYRHWSQRSRNTIEHETRSQRFEDTNTASGQKTYDLPGFADINTSKGLITVELFKEGSPEVVDKFLDLCQKDHFKGMPFQRVIKNYLVQAGHSPSSIPVEEWTAKGKLRGRLHIGPKHEAFMLGTPKNKGNNKDFELLITTAPIPDLNDQLIVFGRVLKGEDVVQEIEEVDTDEHFQPKSPIGITGVVLKLET</sequence>
<proteinExistence type="evidence at transcript level"/>